<gene>
    <name type="primary">flgC</name>
    <name type="ordered locus">Z1712</name>
    <name type="ordered locus">ECs1452</name>
</gene>
<protein>
    <recommendedName>
        <fullName>Flagellar basal-body rod protein FlgC</fullName>
    </recommendedName>
    <alternativeName>
        <fullName>Putative proximal rod protein</fullName>
    </alternativeName>
</protein>
<evidence type="ECO:0000250" key="1"/>
<evidence type="ECO:0000305" key="2"/>
<name>FLGC_ECO57</name>
<reference key="1">
    <citation type="journal article" date="2001" name="Nature">
        <title>Genome sequence of enterohaemorrhagic Escherichia coli O157:H7.</title>
        <authorList>
            <person name="Perna N.T."/>
            <person name="Plunkett G. III"/>
            <person name="Burland V."/>
            <person name="Mau B."/>
            <person name="Glasner J.D."/>
            <person name="Rose D.J."/>
            <person name="Mayhew G.F."/>
            <person name="Evans P.S."/>
            <person name="Gregor J."/>
            <person name="Kirkpatrick H.A."/>
            <person name="Posfai G."/>
            <person name="Hackett J."/>
            <person name="Klink S."/>
            <person name="Boutin A."/>
            <person name="Shao Y."/>
            <person name="Miller L."/>
            <person name="Grotbeck E.J."/>
            <person name="Davis N.W."/>
            <person name="Lim A."/>
            <person name="Dimalanta E.T."/>
            <person name="Potamousis K."/>
            <person name="Apodaca J."/>
            <person name="Anantharaman T.S."/>
            <person name="Lin J."/>
            <person name="Yen G."/>
            <person name="Schwartz D.C."/>
            <person name="Welch R.A."/>
            <person name="Blattner F.R."/>
        </authorList>
    </citation>
    <scope>NUCLEOTIDE SEQUENCE [LARGE SCALE GENOMIC DNA]</scope>
    <source>
        <strain>O157:H7 / EDL933 / ATCC 700927 / EHEC</strain>
    </source>
</reference>
<reference key="2">
    <citation type="journal article" date="2001" name="DNA Res.">
        <title>Complete genome sequence of enterohemorrhagic Escherichia coli O157:H7 and genomic comparison with a laboratory strain K-12.</title>
        <authorList>
            <person name="Hayashi T."/>
            <person name="Makino K."/>
            <person name="Ohnishi M."/>
            <person name="Kurokawa K."/>
            <person name="Ishii K."/>
            <person name="Yokoyama K."/>
            <person name="Han C.-G."/>
            <person name="Ohtsubo E."/>
            <person name="Nakayama K."/>
            <person name="Murata T."/>
            <person name="Tanaka M."/>
            <person name="Tobe T."/>
            <person name="Iida T."/>
            <person name="Takami H."/>
            <person name="Honda T."/>
            <person name="Sasakawa C."/>
            <person name="Ogasawara N."/>
            <person name="Yasunaga T."/>
            <person name="Kuhara S."/>
            <person name="Shiba T."/>
            <person name="Hattori M."/>
            <person name="Shinagawa H."/>
        </authorList>
    </citation>
    <scope>NUCLEOTIDE SEQUENCE [LARGE SCALE GENOMIC DNA]</scope>
    <source>
        <strain>O157:H7 / Sakai / RIMD 0509952 / EHEC</strain>
    </source>
</reference>
<keyword id="KW-0975">Bacterial flagellum</keyword>
<keyword id="KW-1185">Reference proteome</keyword>
<dbReference type="EMBL" id="AE005174">
    <property type="protein sequence ID" value="AAG55820.1"/>
    <property type="molecule type" value="Genomic_DNA"/>
</dbReference>
<dbReference type="EMBL" id="BA000007">
    <property type="protein sequence ID" value="BAB34875.1"/>
    <property type="molecule type" value="Genomic_DNA"/>
</dbReference>
<dbReference type="PIR" id="D90810">
    <property type="entry name" value="D90810"/>
</dbReference>
<dbReference type="PIR" id="H85669">
    <property type="entry name" value="H85669"/>
</dbReference>
<dbReference type="RefSeq" id="NP_309479.1">
    <property type="nucleotide sequence ID" value="NC_002695.1"/>
</dbReference>
<dbReference type="RefSeq" id="WP_001196460.1">
    <property type="nucleotide sequence ID" value="NZ_VOAI01000018.1"/>
</dbReference>
<dbReference type="SMR" id="P0ABX4"/>
<dbReference type="STRING" id="155864.Z1712"/>
<dbReference type="GeneID" id="86863569"/>
<dbReference type="GeneID" id="913368"/>
<dbReference type="KEGG" id="ece:Z1712"/>
<dbReference type="KEGG" id="ecs:ECs_1452"/>
<dbReference type="PATRIC" id="fig|386585.9.peg.1553"/>
<dbReference type="eggNOG" id="COG1558">
    <property type="taxonomic scope" value="Bacteria"/>
</dbReference>
<dbReference type="HOGENOM" id="CLU_123272_1_0_6"/>
<dbReference type="OMA" id="YVAYPNI"/>
<dbReference type="Proteomes" id="UP000000558">
    <property type="component" value="Chromosome"/>
</dbReference>
<dbReference type="Proteomes" id="UP000002519">
    <property type="component" value="Chromosome"/>
</dbReference>
<dbReference type="GO" id="GO:0030694">
    <property type="term" value="C:bacterial-type flagellum basal body, rod"/>
    <property type="evidence" value="ECO:0007669"/>
    <property type="project" value="InterPro"/>
</dbReference>
<dbReference type="GO" id="GO:0071978">
    <property type="term" value="P:bacterial-type flagellum-dependent swarming motility"/>
    <property type="evidence" value="ECO:0007669"/>
    <property type="project" value="TreeGrafter"/>
</dbReference>
<dbReference type="InterPro" id="IPR001444">
    <property type="entry name" value="Flag_bb_rod_N"/>
</dbReference>
<dbReference type="InterPro" id="IPR019776">
    <property type="entry name" value="Flagellar_basal_body_rod_CS"/>
</dbReference>
<dbReference type="InterPro" id="IPR010930">
    <property type="entry name" value="Flg_bb/hook_C_dom"/>
</dbReference>
<dbReference type="InterPro" id="IPR006299">
    <property type="entry name" value="FlgC"/>
</dbReference>
<dbReference type="NCBIfam" id="TIGR01395">
    <property type="entry name" value="FlgC"/>
    <property type="match status" value="1"/>
</dbReference>
<dbReference type="PANTHER" id="PTHR30435:SF2">
    <property type="entry name" value="FLAGELLAR BASAL-BODY ROD PROTEIN FLGC"/>
    <property type="match status" value="1"/>
</dbReference>
<dbReference type="PANTHER" id="PTHR30435">
    <property type="entry name" value="FLAGELLAR PROTEIN"/>
    <property type="match status" value="1"/>
</dbReference>
<dbReference type="Pfam" id="PF00460">
    <property type="entry name" value="Flg_bb_rod"/>
    <property type="match status" value="1"/>
</dbReference>
<dbReference type="Pfam" id="PF06429">
    <property type="entry name" value="Flg_bbr_C"/>
    <property type="match status" value="1"/>
</dbReference>
<dbReference type="PROSITE" id="PS00588">
    <property type="entry name" value="FLAGELLA_BB_ROD"/>
    <property type="match status" value="1"/>
</dbReference>
<comment type="subunit">
    <text evidence="1">The basal body constitutes a major portion of the flagellar organelle and consists of four rings (L,P,S, and M) mounted on a central rod. The rod consists of about 26 subunits of FlgG in the distal portion, and FlgB, FlgC and FlgF are thought to build up the proximal portion of the rod with about 6 subunits each (By similarity).</text>
</comment>
<comment type="subcellular location">
    <subcellularLocation>
        <location evidence="1">Bacterial flagellum basal body</location>
    </subcellularLocation>
</comment>
<comment type="similarity">
    <text evidence="2">Belongs to the flagella basal body rod proteins family.</text>
</comment>
<proteinExistence type="inferred from homology"/>
<accession>P0ABX4</accession>
<accession>P75935</accession>
<feature type="chain" id="PRO_0000180804" description="Flagellar basal-body rod protein FlgC">
    <location>
        <begin position="1"/>
        <end position="134"/>
    </location>
</feature>
<sequence>MALLNIFDIAGSALTAQSQRLNVAASNLANADSVTGPDGQPYRAKQVVFQVNAAPGAATGGVKVADVIESQAPDKLVYEPGNPLADAKGYVKMPNVDVVGEMVNTMSASRSYQANVEVLNTVKSMMLKTLTLGQ</sequence>
<organism>
    <name type="scientific">Escherichia coli O157:H7</name>
    <dbReference type="NCBI Taxonomy" id="83334"/>
    <lineage>
        <taxon>Bacteria</taxon>
        <taxon>Pseudomonadati</taxon>
        <taxon>Pseudomonadota</taxon>
        <taxon>Gammaproteobacteria</taxon>
        <taxon>Enterobacterales</taxon>
        <taxon>Enterobacteriaceae</taxon>
        <taxon>Escherichia</taxon>
    </lineage>
</organism>